<name>RL7_TERTT</name>
<feature type="chain" id="PRO_1000205570" description="Large ribosomal subunit protein bL12">
    <location>
        <begin position="1"/>
        <end position="126"/>
    </location>
</feature>
<proteinExistence type="inferred from homology"/>
<evidence type="ECO:0000255" key="1">
    <source>
        <dbReference type="HAMAP-Rule" id="MF_00368"/>
    </source>
</evidence>
<evidence type="ECO:0000305" key="2"/>
<reference key="1">
    <citation type="journal article" date="2009" name="PLoS ONE">
        <title>The complete genome of Teredinibacter turnerae T7901: an intracellular endosymbiont of marine wood-boring bivalves (shipworms).</title>
        <authorList>
            <person name="Yang J.C."/>
            <person name="Madupu R."/>
            <person name="Durkin A.S."/>
            <person name="Ekborg N.A."/>
            <person name="Pedamallu C.S."/>
            <person name="Hostetler J.B."/>
            <person name="Radune D."/>
            <person name="Toms B.S."/>
            <person name="Henrissat B."/>
            <person name="Coutinho P.M."/>
            <person name="Schwarz S."/>
            <person name="Field L."/>
            <person name="Trindade-Silva A.E."/>
            <person name="Soares C.A.G."/>
            <person name="Elshahawi S."/>
            <person name="Hanora A."/>
            <person name="Schmidt E.W."/>
            <person name="Haygood M.G."/>
            <person name="Posfai J."/>
            <person name="Benner J."/>
            <person name="Madinger C."/>
            <person name="Nove J."/>
            <person name="Anton B."/>
            <person name="Chaudhary K."/>
            <person name="Foster J."/>
            <person name="Holman A."/>
            <person name="Kumar S."/>
            <person name="Lessard P.A."/>
            <person name="Luyten Y.A."/>
            <person name="Slatko B."/>
            <person name="Wood N."/>
            <person name="Wu B."/>
            <person name="Teplitski M."/>
            <person name="Mougous J.D."/>
            <person name="Ward N."/>
            <person name="Eisen J.A."/>
            <person name="Badger J.H."/>
            <person name="Distel D.L."/>
        </authorList>
    </citation>
    <scope>NUCLEOTIDE SEQUENCE [LARGE SCALE GENOMIC DNA]</scope>
    <source>
        <strain>ATCC 39867 / T7901</strain>
    </source>
</reference>
<dbReference type="EMBL" id="CP001614">
    <property type="protein sequence ID" value="ACR14520.1"/>
    <property type="molecule type" value="Genomic_DNA"/>
</dbReference>
<dbReference type="RefSeq" id="WP_015820634.1">
    <property type="nucleotide sequence ID" value="NC_012997.1"/>
</dbReference>
<dbReference type="SMR" id="C5BQ38"/>
<dbReference type="STRING" id="377629.TERTU_0882"/>
<dbReference type="KEGG" id="ttu:TERTU_0882"/>
<dbReference type="eggNOG" id="COG0222">
    <property type="taxonomic scope" value="Bacteria"/>
</dbReference>
<dbReference type="HOGENOM" id="CLU_086499_3_2_6"/>
<dbReference type="OrthoDB" id="9811748at2"/>
<dbReference type="Proteomes" id="UP000009080">
    <property type="component" value="Chromosome"/>
</dbReference>
<dbReference type="GO" id="GO:0022625">
    <property type="term" value="C:cytosolic large ribosomal subunit"/>
    <property type="evidence" value="ECO:0007669"/>
    <property type="project" value="TreeGrafter"/>
</dbReference>
<dbReference type="GO" id="GO:0003729">
    <property type="term" value="F:mRNA binding"/>
    <property type="evidence" value="ECO:0007669"/>
    <property type="project" value="TreeGrafter"/>
</dbReference>
<dbReference type="GO" id="GO:0003735">
    <property type="term" value="F:structural constituent of ribosome"/>
    <property type="evidence" value="ECO:0007669"/>
    <property type="project" value="InterPro"/>
</dbReference>
<dbReference type="GO" id="GO:0006412">
    <property type="term" value="P:translation"/>
    <property type="evidence" value="ECO:0007669"/>
    <property type="project" value="UniProtKB-UniRule"/>
</dbReference>
<dbReference type="CDD" id="cd00387">
    <property type="entry name" value="Ribosomal_L7_L12"/>
    <property type="match status" value="1"/>
</dbReference>
<dbReference type="FunFam" id="3.30.1390.10:FF:000001">
    <property type="entry name" value="50S ribosomal protein L7/L12"/>
    <property type="match status" value="1"/>
</dbReference>
<dbReference type="Gene3D" id="3.30.1390.10">
    <property type="match status" value="1"/>
</dbReference>
<dbReference type="Gene3D" id="1.20.5.710">
    <property type="entry name" value="Single helix bin"/>
    <property type="match status" value="1"/>
</dbReference>
<dbReference type="HAMAP" id="MF_00368">
    <property type="entry name" value="Ribosomal_bL12"/>
    <property type="match status" value="1"/>
</dbReference>
<dbReference type="InterPro" id="IPR000206">
    <property type="entry name" value="Ribosomal_bL12"/>
</dbReference>
<dbReference type="InterPro" id="IPR013823">
    <property type="entry name" value="Ribosomal_bL12_C"/>
</dbReference>
<dbReference type="InterPro" id="IPR014719">
    <property type="entry name" value="Ribosomal_bL12_C/ClpS-like"/>
</dbReference>
<dbReference type="InterPro" id="IPR008932">
    <property type="entry name" value="Ribosomal_bL12_oligo"/>
</dbReference>
<dbReference type="InterPro" id="IPR036235">
    <property type="entry name" value="Ribosomal_bL12_oligo_N_sf"/>
</dbReference>
<dbReference type="NCBIfam" id="TIGR00855">
    <property type="entry name" value="L12"/>
    <property type="match status" value="1"/>
</dbReference>
<dbReference type="PANTHER" id="PTHR45987">
    <property type="entry name" value="39S RIBOSOMAL PROTEIN L12"/>
    <property type="match status" value="1"/>
</dbReference>
<dbReference type="PANTHER" id="PTHR45987:SF4">
    <property type="entry name" value="LARGE RIBOSOMAL SUBUNIT PROTEIN BL12M"/>
    <property type="match status" value="1"/>
</dbReference>
<dbReference type="Pfam" id="PF00542">
    <property type="entry name" value="Ribosomal_L12"/>
    <property type="match status" value="1"/>
</dbReference>
<dbReference type="Pfam" id="PF16320">
    <property type="entry name" value="Ribosomal_L12_N"/>
    <property type="match status" value="1"/>
</dbReference>
<dbReference type="SUPFAM" id="SSF54736">
    <property type="entry name" value="ClpS-like"/>
    <property type="match status" value="1"/>
</dbReference>
<dbReference type="SUPFAM" id="SSF48300">
    <property type="entry name" value="Ribosomal protein L7/12, oligomerisation (N-terminal) domain"/>
    <property type="match status" value="1"/>
</dbReference>
<comment type="function">
    <text evidence="1">Forms part of the ribosomal stalk which helps the ribosome interact with GTP-bound translation factors. Is thus essential for accurate translation.</text>
</comment>
<comment type="subunit">
    <text evidence="1">Homodimer. Part of the ribosomal stalk of the 50S ribosomal subunit. Forms a multimeric L10(L12)X complex, where L10 forms an elongated spine to which 2 to 4 L12 dimers bind in a sequential fashion. Binds GTP-bound translation factors.</text>
</comment>
<comment type="similarity">
    <text evidence="1">Belongs to the bacterial ribosomal protein bL12 family.</text>
</comment>
<sequence length="126" mass="12759">MALSKEDILNAIAEMSVMDVVELVEAMEEKFGVSAAAAVAVAAPAAGDAGAAAAEEQTEFDVVLASAGEKKVNVIKAVRAITGLGLKEAKAMVDGAPSTVKEALSKDDAEAAKKELEEAGATVELK</sequence>
<keyword id="KW-1185">Reference proteome</keyword>
<keyword id="KW-0687">Ribonucleoprotein</keyword>
<keyword id="KW-0689">Ribosomal protein</keyword>
<gene>
    <name evidence="1" type="primary">rplL</name>
    <name type="ordered locus">TERTU_0882</name>
</gene>
<accession>C5BQ38</accession>
<protein>
    <recommendedName>
        <fullName evidence="1">Large ribosomal subunit protein bL12</fullName>
    </recommendedName>
    <alternativeName>
        <fullName evidence="2">50S ribosomal protein L7/L12</fullName>
    </alternativeName>
</protein>
<organism>
    <name type="scientific">Teredinibacter turnerae (strain ATCC 39867 / T7901)</name>
    <dbReference type="NCBI Taxonomy" id="377629"/>
    <lineage>
        <taxon>Bacteria</taxon>
        <taxon>Pseudomonadati</taxon>
        <taxon>Pseudomonadota</taxon>
        <taxon>Gammaproteobacteria</taxon>
        <taxon>Cellvibrionales</taxon>
        <taxon>Cellvibrionaceae</taxon>
        <taxon>Teredinibacter</taxon>
    </lineage>
</organism>